<gene>
    <name type="primary">SLC52A2</name>
    <name type="synonym">GPR172B</name>
    <name type="synonym">PAR2</name>
    <name type="synonym">RFT1</name>
</gene>
<protein>
    <recommendedName>
        <fullName>Solute carrier family 52, riboflavin transporter, member 2</fullName>
    </recommendedName>
    <alternativeName>
        <fullName>Porcine endogenous retrovirus A receptor 2</fullName>
        <shortName>PERV-A receptor 2</shortName>
    </alternativeName>
    <alternativeName>
        <fullName>Protein GPR172B</fullName>
    </alternativeName>
    <alternativeName>
        <fullName>Riboflavin transporter 1</fullName>
        <shortName>RFT1</shortName>
    </alternativeName>
</protein>
<keyword id="KW-1003">Cell membrane</keyword>
<keyword id="KW-0325">Glycoprotein</keyword>
<keyword id="KW-1183">Host cell receptor for virus entry</keyword>
<keyword id="KW-0472">Membrane</keyword>
<keyword id="KW-0675">Receptor</keyword>
<keyword id="KW-0812">Transmembrane</keyword>
<keyword id="KW-1133">Transmembrane helix</keyword>
<keyword id="KW-0813">Transport</keyword>
<sequence>MAAPTLGHLVLTHLLVALLGMGSWAAVNGIWVELPVVVKHLPEGWSLPSYLSVVVALGNLGLLVVTLWRRLAPGKGERVPIQVVQVLSVVGTALLAPLWHHVAPVAGQLHSVAFLTLALVLALACCTSNVTFLPFLSHLPPPFLRSFFLGQGLSALLPCVLALVQGVGRLECSPAPTNGTSGPPLNFPERFPASTFYWALTALLVTSAAAFQGLLLLLPSLPSVTTGGAGPELPLGSPGAEEEEKEEEEALPLQEPPSQAAGTIPGPDPEAHQLFSAHGAFLLGLLAITSALTNGVLPAVQSFSCLPYGRLAYHLAVVLGSAANPLACFLAMGVLCRSLAGLVGLSLLGMLFGAYLMVLAILSPCPPLVGTTAGVVLVVLSWVLCLCVFSYVKVAASSLLHGGGRPALLAAGVAIQMGSLLGAGTMFPPTSIYHVFQSRKDCVDPCGP</sequence>
<reference key="1">
    <citation type="journal article" date="2003" name="Proc. Natl. Acad. Sci. U.S.A.">
        <title>Identification of receptors for pig endogenous retrovirus.</title>
        <authorList>
            <person name="Ericsson T.A."/>
            <person name="Takeuchi Y."/>
            <person name="Templin C."/>
            <person name="Quinn G."/>
            <person name="Farhadian S.F."/>
            <person name="Wood J.C."/>
            <person name="Oldmixon B.A."/>
            <person name="Suling K.M."/>
            <person name="Ishii J.K."/>
            <person name="Kitagawa Y."/>
            <person name="Miyazawa T."/>
            <person name="Salomon D.R."/>
            <person name="Weiss R.A."/>
            <person name="Patience C."/>
        </authorList>
    </citation>
    <scope>NUCLEOTIDE SEQUENCE [MRNA]</scope>
    <scope>FUNCTION AS A VIRAL RECEPTOR</scope>
</reference>
<evidence type="ECO:0000250" key="1">
    <source>
        <dbReference type="UniProtKB" id="Q9HAB3"/>
    </source>
</evidence>
<evidence type="ECO:0000255" key="2"/>
<evidence type="ECO:0000256" key="3">
    <source>
        <dbReference type="SAM" id="MobiDB-lite"/>
    </source>
</evidence>
<evidence type="ECO:0000269" key="4">
    <source>
    </source>
</evidence>
<evidence type="ECO:0000305" key="5"/>
<accession>Q863Y8</accession>
<dbReference type="EMBL" id="AY070776">
    <property type="protein sequence ID" value="AAL59884.1"/>
    <property type="molecule type" value="mRNA"/>
</dbReference>
<dbReference type="SMR" id="Q863Y8"/>
<dbReference type="GlyCosmos" id="Q863Y8">
    <property type="glycosylation" value="1 site, No reported glycans"/>
</dbReference>
<dbReference type="GO" id="GO:0005886">
    <property type="term" value="C:plasma membrane"/>
    <property type="evidence" value="ECO:0000250"/>
    <property type="project" value="UniProtKB"/>
</dbReference>
<dbReference type="GO" id="GO:0062124">
    <property type="term" value="F:4-hydroxybutyrate receptor activity"/>
    <property type="evidence" value="ECO:0000250"/>
    <property type="project" value="UniProtKB"/>
</dbReference>
<dbReference type="GO" id="GO:0032217">
    <property type="term" value="F:riboflavin transmembrane transporter activity"/>
    <property type="evidence" value="ECO:0000250"/>
    <property type="project" value="UniProtKB"/>
</dbReference>
<dbReference type="GO" id="GO:0001618">
    <property type="term" value="F:virus receptor activity"/>
    <property type="evidence" value="ECO:0007669"/>
    <property type="project" value="UniProtKB-KW"/>
</dbReference>
<dbReference type="GO" id="GO:0032218">
    <property type="term" value="P:riboflavin transport"/>
    <property type="evidence" value="ECO:0000250"/>
    <property type="project" value="UniProtKB"/>
</dbReference>
<dbReference type="InterPro" id="IPR009357">
    <property type="entry name" value="Riboflavin_transptr"/>
</dbReference>
<dbReference type="PANTHER" id="PTHR12929">
    <property type="entry name" value="SOLUTE CARRIER FAMILY 52"/>
    <property type="match status" value="1"/>
</dbReference>
<dbReference type="PANTHER" id="PTHR12929:SF20">
    <property type="entry name" value="SOLUTE CARRIER FAMILY 52, RIBOFLAVIN TRANSPORTER, MEMBER 1"/>
    <property type="match status" value="1"/>
</dbReference>
<dbReference type="Pfam" id="PF06237">
    <property type="entry name" value="SLC52_ribofla_tr"/>
    <property type="match status" value="1"/>
</dbReference>
<organism>
    <name type="scientific">Papio hamadryas</name>
    <name type="common">Hamadryas baboon</name>
    <dbReference type="NCBI Taxonomy" id="9557"/>
    <lineage>
        <taxon>Eukaryota</taxon>
        <taxon>Metazoa</taxon>
        <taxon>Chordata</taxon>
        <taxon>Craniata</taxon>
        <taxon>Vertebrata</taxon>
        <taxon>Euteleostomi</taxon>
        <taxon>Mammalia</taxon>
        <taxon>Eutheria</taxon>
        <taxon>Euarchontoglires</taxon>
        <taxon>Primates</taxon>
        <taxon>Haplorrhini</taxon>
        <taxon>Catarrhini</taxon>
        <taxon>Cercopithecidae</taxon>
        <taxon>Cercopithecinae</taxon>
        <taxon>Papio</taxon>
    </lineage>
</organism>
<proteinExistence type="evidence at protein level"/>
<name>S52A2_PAPHA</name>
<feature type="chain" id="PRO_0000042634" description="Solute carrier family 52, riboflavin transporter, member 2">
    <location>
        <begin position="1"/>
        <end position="448"/>
    </location>
</feature>
<feature type="transmembrane region" description="Helical" evidence="2">
    <location>
        <begin position="14"/>
        <end position="34"/>
    </location>
</feature>
<feature type="transmembrane region" description="Helical" evidence="2">
    <location>
        <begin position="47"/>
        <end position="67"/>
    </location>
</feature>
<feature type="transmembrane region" description="Helical" evidence="2">
    <location>
        <begin position="79"/>
        <end position="99"/>
    </location>
</feature>
<feature type="transmembrane region" description="Helical" evidence="2">
    <location>
        <begin position="105"/>
        <end position="125"/>
    </location>
</feature>
<feature type="transmembrane region" description="Helical" evidence="2">
    <location>
        <begin position="147"/>
        <end position="167"/>
    </location>
</feature>
<feature type="transmembrane region" description="Helical" evidence="2">
    <location>
        <begin position="198"/>
        <end position="218"/>
    </location>
</feature>
<feature type="transmembrane region" description="Helical" evidence="2">
    <location>
        <begin position="280"/>
        <end position="300"/>
    </location>
</feature>
<feature type="transmembrane region" description="Helical" evidence="2">
    <location>
        <begin position="315"/>
        <end position="335"/>
    </location>
</feature>
<feature type="transmembrane region" description="Helical" evidence="2">
    <location>
        <begin position="342"/>
        <end position="362"/>
    </location>
</feature>
<feature type="transmembrane region" description="Helical" evidence="2">
    <location>
        <begin position="369"/>
        <end position="389"/>
    </location>
</feature>
<feature type="transmembrane region" description="Helical" evidence="2">
    <location>
        <begin position="407"/>
        <end position="427"/>
    </location>
</feature>
<feature type="region of interest" description="Disordered" evidence="3">
    <location>
        <begin position="228"/>
        <end position="267"/>
    </location>
</feature>
<feature type="compositionally biased region" description="Acidic residues" evidence="3">
    <location>
        <begin position="240"/>
        <end position="250"/>
    </location>
</feature>
<feature type="glycosylation site" description="N-linked (GlcNAc...) asparagine" evidence="2">
    <location>
        <position position="178"/>
    </location>
</feature>
<comment type="function">
    <text evidence="1">Plasma membrane transporter mediating the uptake by cells of the water soluble vitamin B2/riboflavin that plays a key role in biochemical oxidation-reduction reactions of the carbohydrate, lipid, and amino acid metabolism. May also act as a receptor for 4-hydroxybutyrate.</text>
</comment>
<comment type="function">
    <text evidence="4">(Microbial infection) In case of infection by retroviruses, acts as a cell receptor to retroviral envelopes similar to the porcine endogenous retrovirus (PERV-A).</text>
</comment>
<comment type="catalytic activity">
    <reaction evidence="1">
        <text>riboflavin(in) = riboflavin(out)</text>
        <dbReference type="Rhea" id="RHEA:35015"/>
        <dbReference type="ChEBI" id="CHEBI:57986"/>
    </reaction>
</comment>
<comment type="activity regulation">
    <text evidence="1">Riboflavin transport is Na(+)-independent but moderately pH-sensitive (By similarity). Activity is strongly inhibited by riboflavin analogs, such as lumiflavin (By similarity). Weakly inhibited by flavin adenine dinucleotide (FAD) and flavin mononucleotide (FMN) (By similarity).</text>
</comment>
<comment type="subcellular location">
    <subcellularLocation>
        <location evidence="1">Cell membrane</location>
        <topology evidence="2">Multi-pass membrane protein</topology>
    </subcellularLocation>
</comment>
<comment type="similarity">
    <text evidence="5">Belongs to the riboflavin transporter family.</text>
</comment>